<name>PYRC_SERP5</name>
<comment type="function">
    <text evidence="1">Catalyzes the reversible cyclization of carbamoyl aspartate to dihydroorotate.</text>
</comment>
<comment type="catalytic activity">
    <reaction evidence="1">
        <text>(S)-dihydroorotate + H2O = N-carbamoyl-L-aspartate + H(+)</text>
        <dbReference type="Rhea" id="RHEA:24296"/>
        <dbReference type="ChEBI" id="CHEBI:15377"/>
        <dbReference type="ChEBI" id="CHEBI:15378"/>
        <dbReference type="ChEBI" id="CHEBI:30864"/>
        <dbReference type="ChEBI" id="CHEBI:32814"/>
        <dbReference type="EC" id="3.5.2.3"/>
    </reaction>
</comment>
<comment type="cofactor">
    <cofactor evidence="1">
        <name>Zn(2+)</name>
        <dbReference type="ChEBI" id="CHEBI:29105"/>
    </cofactor>
    <text evidence="1">Binds 2 Zn(2+) ions per subunit.</text>
</comment>
<comment type="pathway">
    <text evidence="1">Pyrimidine metabolism; UMP biosynthesis via de novo pathway; (S)-dihydroorotate from bicarbonate: step 3/3.</text>
</comment>
<comment type="subunit">
    <text evidence="1">Homodimer.</text>
</comment>
<comment type="similarity">
    <text evidence="1">Belongs to the metallo-dependent hydrolases superfamily. DHOase family. Class II DHOase subfamily.</text>
</comment>
<dbReference type="EC" id="3.5.2.3" evidence="1"/>
<dbReference type="EMBL" id="CP000826">
    <property type="protein sequence ID" value="ABV40999.1"/>
    <property type="molecule type" value="Genomic_DNA"/>
</dbReference>
<dbReference type="SMR" id="A8GD09"/>
<dbReference type="STRING" id="399741.Spro_1896"/>
<dbReference type="MEROPS" id="M38.A02"/>
<dbReference type="KEGG" id="spe:Spro_1896"/>
<dbReference type="eggNOG" id="COG0418">
    <property type="taxonomic scope" value="Bacteria"/>
</dbReference>
<dbReference type="HOGENOM" id="CLU_041558_1_0_6"/>
<dbReference type="OrthoDB" id="9808095at2"/>
<dbReference type="UniPathway" id="UPA00070">
    <property type="reaction ID" value="UER00117"/>
</dbReference>
<dbReference type="GO" id="GO:0005829">
    <property type="term" value="C:cytosol"/>
    <property type="evidence" value="ECO:0007669"/>
    <property type="project" value="TreeGrafter"/>
</dbReference>
<dbReference type="GO" id="GO:0004151">
    <property type="term" value="F:dihydroorotase activity"/>
    <property type="evidence" value="ECO:0007669"/>
    <property type="project" value="UniProtKB-UniRule"/>
</dbReference>
<dbReference type="GO" id="GO:0008270">
    <property type="term" value="F:zinc ion binding"/>
    <property type="evidence" value="ECO:0007669"/>
    <property type="project" value="UniProtKB-UniRule"/>
</dbReference>
<dbReference type="GO" id="GO:0006207">
    <property type="term" value="P:'de novo' pyrimidine nucleobase biosynthetic process"/>
    <property type="evidence" value="ECO:0007669"/>
    <property type="project" value="TreeGrafter"/>
</dbReference>
<dbReference type="GO" id="GO:0044205">
    <property type="term" value="P:'de novo' UMP biosynthetic process"/>
    <property type="evidence" value="ECO:0007669"/>
    <property type="project" value="UniProtKB-UniRule"/>
</dbReference>
<dbReference type="CDD" id="cd01294">
    <property type="entry name" value="DHOase"/>
    <property type="match status" value="1"/>
</dbReference>
<dbReference type="FunFam" id="3.20.20.140:FF:000006">
    <property type="entry name" value="Dihydroorotase"/>
    <property type="match status" value="1"/>
</dbReference>
<dbReference type="Gene3D" id="3.20.20.140">
    <property type="entry name" value="Metal-dependent hydrolases"/>
    <property type="match status" value="1"/>
</dbReference>
<dbReference type="HAMAP" id="MF_00219">
    <property type="entry name" value="PyrC_classII"/>
    <property type="match status" value="1"/>
</dbReference>
<dbReference type="InterPro" id="IPR006680">
    <property type="entry name" value="Amidohydro-rel"/>
</dbReference>
<dbReference type="InterPro" id="IPR004721">
    <property type="entry name" value="DHOdimr"/>
</dbReference>
<dbReference type="InterPro" id="IPR002195">
    <property type="entry name" value="Dihydroorotase_CS"/>
</dbReference>
<dbReference type="InterPro" id="IPR032466">
    <property type="entry name" value="Metal_Hydrolase"/>
</dbReference>
<dbReference type="NCBIfam" id="TIGR00856">
    <property type="entry name" value="pyrC_dimer"/>
    <property type="match status" value="1"/>
</dbReference>
<dbReference type="PANTHER" id="PTHR43137">
    <property type="entry name" value="DIHYDROOROTASE"/>
    <property type="match status" value="1"/>
</dbReference>
<dbReference type="PANTHER" id="PTHR43137:SF1">
    <property type="entry name" value="DIHYDROOROTASE"/>
    <property type="match status" value="1"/>
</dbReference>
<dbReference type="Pfam" id="PF01979">
    <property type="entry name" value="Amidohydro_1"/>
    <property type="match status" value="1"/>
</dbReference>
<dbReference type="PIRSF" id="PIRSF001237">
    <property type="entry name" value="DHOdimr"/>
    <property type="match status" value="1"/>
</dbReference>
<dbReference type="SUPFAM" id="SSF51556">
    <property type="entry name" value="Metallo-dependent hydrolases"/>
    <property type="match status" value="1"/>
</dbReference>
<dbReference type="PROSITE" id="PS00483">
    <property type="entry name" value="DIHYDROOROTASE_2"/>
    <property type="match status" value="1"/>
</dbReference>
<keyword id="KW-0378">Hydrolase</keyword>
<keyword id="KW-0479">Metal-binding</keyword>
<keyword id="KW-0665">Pyrimidine biosynthesis</keyword>
<keyword id="KW-0862">Zinc</keyword>
<gene>
    <name evidence="1" type="primary">pyrC</name>
    <name type="ordered locus">Spro_1896</name>
</gene>
<evidence type="ECO:0000255" key="1">
    <source>
        <dbReference type="HAMAP-Rule" id="MF_00219"/>
    </source>
</evidence>
<accession>A8GD09</accession>
<feature type="chain" id="PRO_1000058651" description="Dihydroorotase">
    <location>
        <begin position="1"/>
        <end position="348"/>
    </location>
</feature>
<feature type="active site" evidence="1">
    <location>
        <position position="251"/>
    </location>
</feature>
<feature type="binding site" evidence="1">
    <location>
        <position position="17"/>
    </location>
    <ligand>
        <name>Zn(2+)</name>
        <dbReference type="ChEBI" id="CHEBI:29105"/>
        <label>1</label>
    </ligand>
</feature>
<feature type="binding site" evidence="1">
    <location>
        <begin position="19"/>
        <end position="21"/>
    </location>
    <ligand>
        <name>substrate</name>
    </ligand>
</feature>
<feature type="binding site" evidence="1">
    <location>
        <position position="19"/>
    </location>
    <ligand>
        <name>Zn(2+)</name>
        <dbReference type="ChEBI" id="CHEBI:29105"/>
        <label>1</label>
    </ligand>
</feature>
<feature type="binding site" evidence="1">
    <location>
        <position position="45"/>
    </location>
    <ligand>
        <name>substrate</name>
    </ligand>
</feature>
<feature type="binding site" description="via carbamate group" evidence="1">
    <location>
        <position position="103"/>
    </location>
    <ligand>
        <name>Zn(2+)</name>
        <dbReference type="ChEBI" id="CHEBI:29105"/>
        <label>1</label>
    </ligand>
</feature>
<feature type="binding site" description="via carbamate group" evidence="1">
    <location>
        <position position="103"/>
    </location>
    <ligand>
        <name>Zn(2+)</name>
        <dbReference type="ChEBI" id="CHEBI:29105"/>
        <label>2</label>
    </ligand>
</feature>
<feature type="binding site" evidence="1">
    <location>
        <position position="140"/>
    </location>
    <ligand>
        <name>substrate</name>
    </ligand>
</feature>
<feature type="binding site" evidence="1">
    <location>
        <position position="140"/>
    </location>
    <ligand>
        <name>Zn(2+)</name>
        <dbReference type="ChEBI" id="CHEBI:29105"/>
        <label>2</label>
    </ligand>
</feature>
<feature type="binding site" evidence="1">
    <location>
        <position position="178"/>
    </location>
    <ligand>
        <name>Zn(2+)</name>
        <dbReference type="ChEBI" id="CHEBI:29105"/>
        <label>2</label>
    </ligand>
</feature>
<feature type="binding site" evidence="1">
    <location>
        <position position="223"/>
    </location>
    <ligand>
        <name>substrate</name>
    </ligand>
</feature>
<feature type="binding site" evidence="1">
    <location>
        <position position="251"/>
    </location>
    <ligand>
        <name>Zn(2+)</name>
        <dbReference type="ChEBI" id="CHEBI:29105"/>
        <label>1</label>
    </ligand>
</feature>
<feature type="binding site" evidence="1">
    <location>
        <position position="255"/>
    </location>
    <ligand>
        <name>substrate</name>
    </ligand>
</feature>
<feature type="binding site" evidence="1">
    <location>
        <position position="267"/>
    </location>
    <ligand>
        <name>substrate</name>
    </ligand>
</feature>
<feature type="modified residue" description="N6-carboxylysine" evidence="1">
    <location>
        <position position="103"/>
    </location>
</feature>
<proteinExistence type="inferred from homology"/>
<reference key="1">
    <citation type="submission" date="2007-09" db="EMBL/GenBank/DDBJ databases">
        <title>Complete sequence of chromosome of Serratia proteamaculans 568.</title>
        <authorList>
            <consortium name="US DOE Joint Genome Institute"/>
            <person name="Copeland A."/>
            <person name="Lucas S."/>
            <person name="Lapidus A."/>
            <person name="Barry K."/>
            <person name="Glavina del Rio T."/>
            <person name="Dalin E."/>
            <person name="Tice H."/>
            <person name="Pitluck S."/>
            <person name="Chain P."/>
            <person name="Malfatti S."/>
            <person name="Shin M."/>
            <person name="Vergez L."/>
            <person name="Schmutz J."/>
            <person name="Larimer F."/>
            <person name="Land M."/>
            <person name="Hauser L."/>
            <person name="Kyrpides N."/>
            <person name="Kim E."/>
            <person name="Taghavi S."/>
            <person name="Newman L."/>
            <person name="Vangronsveld J."/>
            <person name="van der Lelie D."/>
            <person name="Richardson P."/>
        </authorList>
    </citation>
    <scope>NUCLEOTIDE SEQUENCE [LARGE SCALE GENOMIC DNA]</scope>
    <source>
        <strain>568</strain>
    </source>
</reference>
<sequence length="348" mass="38518">MTAQPQALKIRRPDDWHIHLRDDDMLKTVLPYTSQVFGRAIVMPNLALPITTVAAACAYRDRILAAVPQGHDFTPLMTCYLTNSLDAAELVNGFEQGVFTAAKLYPANATTNSSHGVSDVKAIYPLFEQMQKIGMPLLIHGEVTDAAVDIFDREARFIEQVMEPIRQQFPELKIVFEHITTKEAAQYVQEGNRFLGATITPQHLMFNRNHMLVGGIRPHLFCLPILKRNIHQDALRKAVASGSDRFFLGTDSAPHAKHRKESSCGCAGVFNAPNAIPAYASVFEQLGALDHLEAFCSLNGPRFYGLPVNTDFIELQRVATTQPEEIAMGSETVIPFLAGESLSWSVKA</sequence>
<protein>
    <recommendedName>
        <fullName evidence="1">Dihydroorotase</fullName>
        <shortName evidence="1">DHOase</shortName>
        <ecNumber evidence="1">3.5.2.3</ecNumber>
    </recommendedName>
</protein>
<organism>
    <name type="scientific">Serratia proteamaculans (strain 568)</name>
    <dbReference type="NCBI Taxonomy" id="399741"/>
    <lineage>
        <taxon>Bacteria</taxon>
        <taxon>Pseudomonadati</taxon>
        <taxon>Pseudomonadota</taxon>
        <taxon>Gammaproteobacteria</taxon>
        <taxon>Enterobacterales</taxon>
        <taxon>Yersiniaceae</taxon>
        <taxon>Serratia</taxon>
    </lineage>
</organism>